<gene>
    <name evidence="10" type="primary">rdc1</name>
</gene>
<protein>
    <recommendedName>
        <fullName evidence="10">Non-reducing polyketide synthase rdc1</fullName>
        <shortName evidence="10">NR-PKS rdc1</shortName>
        <ecNumber evidence="11">2.3.1.-</ecNumber>
    </recommendedName>
    <alternativeName>
        <fullName evidence="10">Radicicol biosynthesis cluster protein rdc1</fullName>
    </alternativeName>
</protein>
<reference key="1">
    <citation type="journal article" date="2008" name="Appl. Environ. Microbiol.">
        <title>Genes for the biosynthesis of the fungal polyketides hypothemycin from Hypomyces subiculosus and radicicol from Pochonia chlamydosporia.</title>
        <authorList>
            <person name="Reeves C.D."/>
            <person name="Hu Z."/>
            <person name="Reid R."/>
            <person name="Kealey J.T."/>
        </authorList>
    </citation>
    <scope>NUCLEOTIDE SEQUENCE [GENOMIC DNA]</scope>
    <scope>FUNCTION</scope>
    <source>
        <strain>ATCC 16683 / CBS 504.66</strain>
    </source>
</reference>
<reference key="2">
    <citation type="journal article" date="2009" name="Curr. Top. Med. Chem.">
        <title>Hsp90 inhibition with resorcyclic acid lactones (RALs).</title>
        <authorList>
            <person name="Winssinger N."/>
            <person name="Fontaine J.G."/>
            <person name="Barluenga S."/>
        </authorList>
    </citation>
    <scope>REVIEW ON BIOTECHNOLOGY</scope>
</reference>
<accession>B3FWT6</accession>
<proteinExistence type="evidence at protein level"/>
<comment type="function">
    <text evidence="9 11">Non-reducing polyketide synthase; part of the gene cluster that mediates the biosynthesis of radicicol, a resorcylic acid lactone (RAL) that irreversibly inhibits the HSP90 molecular chaperone, an important target for cancer chemotherapy (PubMed:18567690). The radicicol cluster encodes only two apparent post-PKS enzymes, a cytochrome P450 monooxygenase (rdc4) and a non-heme halogenase (rdc2) that could introduce the epoxide and the chlorine, respectively. If this cluster includes all the genes required for radicicol biosynthesis, the remaining structural features of radicicol are presumably generated by the PKSs rdc1 and rdc5. The C-2' ketone could arise if the R-PKS rdc5 and NR-PKS rdc1 each carry out four iterations, in contrast to the five iteration-three iteration split for the hypothemycin PKSs. The origin of the cis 5',6' double bond is not known. The radicicol R-PKS rdc5 ER domain may catalyze either double bond isomerization or reduction in the third iteration (Probable) (PubMed:18567690).</text>
</comment>
<comment type="pathway">
    <text evidence="9">Secondary metabolite biosynthesis.</text>
</comment>
<comment type="domain">
    <text evidence="2">Multidomain protein; including a starter unit:ACP transacylase (SAT) that selects the starter unit; a ketosynthase (KS) that catalyzes repeated decarboxylative condensation to elongate the polyketide backbone; a malonyl-CoA:ACP transacylase (MAT) that selects and transfers the extender unit malonyl-CoA; a product template (PT) domain that controls the immediate cyclization regioselectivity of the reactive polyketide backbone; and an acyl-carrier protein (ACP) that serves as the tether of the growing and completed polyketide via its phosphopantetheinyl arm (By similarity).</text>
</comment>
<comment type="domain">
    <text evidence="1">The release of the polyketide chain from the non-reducing polyketide synthase is mediated by the thioesterase (TE) domain localized at the C-ter of the protein (By similarity).</text>
</comment>
<comment type="biotechnology">
    <text>Radicicol is an important pharmacophore as an inhibitor of heat shock protein 90 (Hsp90), an ATP-dependent chaperone involved in the post-translational maturation and stabilization of over one hundred proteins, and which activity has been implicated in diverse pathologies ranging from oncology to neurodegenerative and infectious diseases (PubMed:19860733).</text>
</comment>
<dbReference type="EC" id="2.3.1.-" evidence="11"/>
<dbReference type="EMBL" id="EU520419">
    <property type="protein sequence ID" value="ACD39770.1"/>
    <property type="molecule type" value="Genomic_DNA"/>
</dbReference>
<dbReference type="SMR" id="B3FWT6"/>
<dbReference type="ESTHER" id="metcm-rdc1">
    <property type="family name" value="Thioesterase"/>
</dbReference>
<dbReference type="GO" id="GO:0004315">
    <property type="term" value="F:3-oxoacyl-[acyl-carrier-protein] synthase activity"/>
    <property type="evidence" value="ECO:0007669"/>
    <property type="project" value="InterPro"/>
</dbReference>
<dbReference type="GO" id="GO:0004312">
    <property type="term" value="F:fatty acid synthase activity"/>
    <property type="evidence" value="ECO:0007669"/>
    <property type="project" value="TreeGrafter"/>
</dbReference>
<dbReference type="GO" id="GO:0031177">
    <property type="term" value="F:phosphopantetheine binding"/>
    <property type="evidence" value="ECO:0007669"/>
    <property type="project" value="InterPro"/>
</dbReference>
<dbReference type="GO" id="GO:0006633">
    <property type="term" value="P:fatty acid biosynthetic process"/>
    <property type="evidence" value="ECO:0007669"/>
    <property type="project" value="InterPro"/>
</dbReference>
<dbReference type="GO" id="GO:0044550">
    <property type="term" value="P:secondary metabolite biosynthetic process"/>
    <property type="evidence" value="ECO:0007669"/>
    <property type="project" value="TreeGrafter"/>
</dbReference>
<dbReference type="CDD" id="cd00833">
    <property type="entry name" value="PKS"/>
    <property type="match status" value="1"/>
</dbReference>
<dbReference type="Gene3D" id="3.30.70.3290">
    <property type="match status" value="1"/>
</dbReference>
<dbReference type="Gene3D" id="3.40.47.10">
    <property type="match status" value="1"/>
</dbReference>
<dbReference type="Gene3D" id="1.10.1200.10">
    <property type="entry name" value="ACP-like"/>
    <property type="match status" value="1"/>
</dbReference>
<dbReference type="Gene3D" id="3.40.50.1820">
    <property type="entry name" value="alpha/beta hydrolase"/>
    <property type="match status" value="1"/>
</dbReference>
<dbReference type="Gene3D" id="3.30.70.250">
    <property type="entry name" value="Malonyl-CoA ACP transacylase, ACP-binding"/>
    <property type="match status" value="1"/>
</dbReference>
<dbReference type="Gene3D" id="3.40.366.10">
    <property type="entry name" value="Malonyl-Coenzyme A Acyl Carrier Protein, domain 2"/>
    <property type="match status" value="1"/>
</dbReference>
<dbReference type="Gene3D" id="3.10.129.110">
    <property type="entry name" value="Polyketide synthase dehydratase"/>
    <property type="match status" value="1"/>
</dbReference>
<dbReference type="InterPro" id="IPR029058">
    <property type="entry name" value="AB_hydrolase_fold"/>
</dbReference>
<dbReference type="InterPro" id="IPR001227">
    <property type="entry name" value="Ac_transferase_dom_sf"/>
</dbReference>
<dbReference type="InterPro" id="IPR036736">
    <property type="entry name" value="ACP-like_sf"/>
</dbReference>
<dbReference type="InterPro" id="IPR014043">
    <property type="entry name" value="Acyl_transferase_dom"/>
</dbReference>
<dbReference type="InterPro" id="IPR016035">
    <property type="entry name" value="Acyl_Trfase/lysoPLipase"/>
</dbReference>
<dbReference type="InterPro" id="IPR018201">
    <property type="entry name" value="Ketoacyl_synth_AS"/>
</dbReference>
<dbReference type="InterPro" id="IPR014031">
    <property type="entry name" value="Ketoacyl_synth_C"/>
</dbReference>
<dbReference type="InterPro" id="IPR014030">
    <property type="entry name" value="Ketoacyl_synth_N"/>
</dbReference>
<dbReference type="InterPro" id="IPR016036">
    <property type="entry name" value="Malonyl_transacylase_ACP-bd"/>
</dbReference>
<dbReference type="InterPro" id="IPR020841">
    <property type="entry name" value="PKS_Beta-ketoAc_synthase_dom"/>
</dbReference>
<dbReference type="InterPro" id="IPR042104">
    <property type="entry name" value="PKS_dehydratase_sf"/>
</dbReference>
<dbReference type="InterPro" id="IPR049900">
    <property type="entry name" value="PKS_mFAS_DH"/>
</dbReference>
<dbReference type="InterPro" id="IPR050091">
    <property type="entry name" value="PKS_NRPS_Biosynth_Enz"/>
</dbReference>
<dbReference type="InterPro" id="IPR020806">
    <property type="entry name" value="PKS_PP-bd"/>
</dbReference>
<dbReference type="InterPro" id="IPR009081">
    <property type="entry name" value="PP-bd_ACP"/>
</dbReference>
<dbReference type="InterPro" id="IPR006162">
    <property type="entry name" value="Ppantetheine_attach_site"/>
</dbReference>
<dbReference type="InterPro" id="IPR030918">
    <property type="entry name" value="PT_fungal_PKS"/>
</dbReference>
<dbReference type="InterPro" id="IPR032088">
    <property type="entry name" value="SAT"/>
</dbReference>
<dbReference type="InterPro" id="IPR001031">
    <property type="entry name" value="Thioesterase"/>
</dbReference>
<dbReference type="InterPro" id="IPR016039">
    <property type="entry name" value="Thiolase-like"/>
</dbReference>
<dbReference type="NCBIfam" id="TIGR04532">
    <property type="entry name" value="PT_fungal_PKS"/>
    <property type="match status" value="1"/>
</dbReference>
<dbReference type="PANTHER" id="PTHR43775">
    <property type="entry name" value="FATTY ACID SYNTHASE"/>
    <property type="match status" value="1"/>
</dbReference>
<dbReference type="PANTHER" id="PTHR43775:SF37">
    <property type="entry name" value="SI:DKEY-61P9.11"/>
    <property type="match status" value="1"/>
</dbReference>
<dbReference type="Pfam" id="PF00698">
    <property type="entry name" value="Acyl_transf_1"/>
    <property type="match status" value="1"/>
</dbReference>
<dbReference type="Pfam" id="PF22621">
    <property type="entry name" value="CurL-like_PKS_C"/>
    <property type="match status" value="1"/>
</dbReference>
<dbReference type="Pfam" id="PF00109">
    <property type="entry name" value="ketoacyl-synt"/>
    <property type="match status" value="1"/>
</dbReference>
<dbReference type="Pfam" id="PF02801">
    <property type="entry name" value="Ketoacyl-synt_C"/>
    <property type="match status" value="1"/>
</dbReference>
<dbReference type="Pfam" id="PF00550">
    <property type="entry name" value="PP-binding"/>
    <property type="match status" value="1"/>
</dbReference>
<dbReference type="Pfam" id="PF16073">
    <property type="entry name" value="SAT"/>
    <property type="match status" value="1"/>
</dbReference>
<dbReference type="Pfam" id="PF00975">
    <property type="entry name" value="Thioesterase"/>
    <property type="match status" value="1"/>
</dbReference>
<dbReference type="SMART" id="SM00827">
    <property type="entry name" value="PKS_AT"/>
    <property type="match status" value="1"/>
</dbReference>
<dbReference type="SMART" id="SM00825">
    <property type="entry name" value="PKS_KS"/>
    <property type="match status" value="1"/>
</dbReference>
<dbReference type="SMART" id="SM00823">
    <property type="entry name" value="PKS_PP"/>
    <property type="match status" value="1"/>
</dbReference>
<dbReference type="SUPFAM" id="SSF47336">
    <property type="entry name" value="ACP-like"/>
    <property type="match status" value="1"/>
</dbReference>
<dbReference type="SUPFAM" id="SSF53474">
    <property type="entry name" value="alpha/beta-Hydrolases"/>
    <property type="match status" value="1"/>
</dbReference>
<dbReference type="SUPFAM" id="SSF52151">
    <property type="entry name" value="FabD/lysophospholipase-like"/>
    <property type="match status" value="1"/>
</dbReference>
<dbReference type="SUPFAM" id="SSF55048">
    <property type="entry name" value="Probable ACP-binding domain of malonyl-CoA ACP transacylase"/>
    <property type="match status" value="1"/>
</dbReference>
<dbReference type="SUPFAM" id="SSF53901">
    <property type="entry name" value="Thiolase-like"/>
    <property type="match status" value="1"/>
</dbReference>
<dbReference type="PROSITE" id="PS50075">
    <property type="entry name" value="CARRIER"/>
    <property type="match status" value="1"/>
</dbReference>
<dbReference type="PROSITE" id="PS00606">
    <property type="entry name" value="KS3_1"/>
    <property type="match status" value="1"/>
</dbReference>
<dbReference type="PROSITE" id="PS52004">
    <property type="entry name" value="KS3_2"/>
    <property type="match status" value="1"/>
</dbReference>
<dbReference type="PROSITE" id="PS00012">
    <property type="entry name" value="PHOSPHOPANTETHEINE"/>
    <property type="match status" value="1"/>
</dbReference>
<dbReference type="PROSITE" id="PS52019">
    <property type="entry name" value="PKS_MFAS_DH"/>
    <property type="match status" value="1"/>
</dbReference>
<sequence length="2090" mass="228569">MKSHTSAAKVVFLVGDQVDSWHNGLQHVIKAAGATPWLQSYLDDLSNAIKAEIAEAALDNALHASLGTFSSLLELGERYRHRSDDLGMAQCLLLHAVRSSLFLQMAKQSAHILSPESQTEWLGISGGLISLSPRFVAEDFETLREASIEIGRLFVRLCKLVSVRSRAIEDNTGVWGWAILGVSKDEIRKGLDKFQQNMRIPAIKRAQVGVTGPGWSTIIGPPSVLDLCIKQCPAIATATKNPLNIHALQHTLAITQTDLNYIVGNSQLMSRALHHIRPRLWGMDDPEATYQNWGDMLRAICSQVLSLSLDIPEAVANLGASLRGCDSVQIIQMDNTSHGPFVSTALKAPGRKATLLETHSYLQTQFQGTEPPQKTGRIAIVGMSGRGPRSDNIDEFWDVIMQKQDTCTEVPKDRFDIDEFYCEEHGKGNKICTMTTKYGCFMDKPGHFDARFFHISPRESMLMDPGHRHFLMSSYEALEMAGYSDGPTKLTDPNRIAAFYGQVTDDWHDQSHPTLGCDAYTLQGVQRAFSSGRLAWQFKWEGPTYSLDSACASTTAAIHLACMSLLSNDIDMAVAGASNILNYPHSFACLSKSGVLSDTGNCKPYRDDADGYCRADFVGSVVLKRLEDAVADNDNILAVIASSGRNHSGNSTSITSSDPGAQERLFRKVLRNANVSPDDISYVEMHGTGTPVGDPAEMSAVGNVFKHRRRADGPLPVGAVKANFGHSEGAAGMASLLKCIMMFKTDTIPPQAGMPHALNPNFPPLSELNVEIPAEPKEFKKTRSGEPRRILLNNFDAAGGNACLLLEDWDGSHSPVAQLEDTTDTRSSHVVTLSSRTQAAHKANKQNFLNWLRENTTARLADIAYTTAARRMHHPIRSAYTASTTEELMARVEASIQVSESSSLTSQQTPIIFVFSGQGSHYAGMGSDLYQTSPSFRETVDLCGHIGKIHGFPPFIDLIADKAIDMSTKSTVQTQLAVLTLEIGLAAFWKAAGVQPSAVMGHSLGEYAALHVSGVLSLADVLYLVGQRASLLLERCEENGFAMLAVAMSAKETQELLDSNKEFPSCSIACFNGPNATVISGEAHDISQLQGRVSKASKVLPVPYGFHSFQMDSIISEYSTLADGVTFSEPKIPVASTLVGSMIETKDIINSVYLAQQTRQPVDFIGGLNAIQQMFNDPIWLEIGPNQVCTQFVRASSSSSSPNTKTLSTLEGQSRDWVAINKCMAMLYTQGIAIDWLALHKPFMNSLRMVTLPAYAWDTKDYWITYAEAKAVQGTTSSAPRDIKQPIISTFAQHVAKESSSNAGKLEITFRASVADQNLQAVMEGHRMEQLPICPGSGFCEAAFSAAAYVLESIGRKEDATVTKMRLQHPVMHRPLTKNLVGPDGELFTTITMESKDSNNIHVSWKASASGPKSSMFEMGTCTLVVQKNVKALQATWDRTAYLVRDRMDSIIKSAEDGQGHWLKHDIFYSLFATTVQYDPLYKCTKMAYISNDFSEAVAEVVLQDNPADAKFMASPYWGEGIVHIAGFVVNANPLRSPGTCFINSGFESFEQTVEFRAGKSYLAYARAHQVEEGRKICQVFVFDSEGKIVAQCYNLSFVRISNALLQHNLSEGASKPVGRGMAKQEKQEVPATTEVVRQPEKEESRHSVDTPSFSDVLINTIVSETGLDPSELTDDTVVAELGVDSIMSIEIANKVSNATGEQLTPMFLHEYPTIGDIKRAFDILTPVSSESDAELTEEYDLLEDTVTEEAVVHVPSPSSTSLEAVVTGSITTKQRDAPQQPRSIGDGPEPAVRFTLLHGRASKRVQDQQASPSPFYLIADGTGSIATYLHLPPHINTKMTIYGVDSPYLHCPSRLTPDVGIPGIAKLIVDELVKRQPQGVPFWLGGFSGGAMIAYEIARQLSALGHVIDSLLLIDMCPPRQIQAQRYDDELGLAMFDAISGNDDSGVWESSDKTHQHLKALFASVSAYNPPPLAKGESPPAKRVALIWAQKGMIDRCANSPRFRQILADRGLVTESYPGFMEDPKLGPVAWSLIHKTESDLGPNGWDKFVGRDELLCMAVEADHLELPTPEFVHLLGEKMDMAFEHFGR</sequence>
<name>RDC1_METCM</name>
<evidence type="ECO:0000250" key="1">
    <source>
        <dbReference type="UniProtKB" id="Q5ATJ7"/>
    </source>
</evidence>
<evidence type="ECO:0000250" key="2">
    <source>
        <dbReference type="UniProtKB" id="Q5B0D0"/>
    </source>
</evidence>
<evidence type="ECO:0000255" key="3"/>
<evidence type="ECO:0000255" key="4">
    <source>
        <dbReference type="PROSITE-ProRule" id="PRU00258"/>
    </source>
</evidence>
<evidence type="ECO:0000255" key="5">
    <source>
        <dbReference type="PROSITE-ProRule" id="PRU01348"/>
    </source>
</evidence>
<evidence type="ECO:0000255" key="6">
    <source>
        <dbReference type="PROSITE-ProRule" id="PRU01363"/>
    </source>
</evidence>
<evidence type="ECO:0000255" key="7">
    <source>
        <dbReference type="PROSITE-ProRule" id="PRU10022"/>
    </source>
</evidence>
<evidence type="ECO:0000256" key="8">
    <source>
        <dbReference type="SAM" id="MobiDB-lite"/>
    </source>
</evidence>
<evidence type="ECO:0000269" key="9">
    <source>
    </source>
</evidence>
<evidence type="ECO:0000303" key="10">
    <source>
    </source>
</evidence>
<evidence type="ECO:0000305" key="11">
    <source>
    </source>
</evidence>
<feature type="chain" id="PRO_0000437586" description="Non-reducing polyketide synthase rdc1">
    <location>
        <begin position="1"/>
        <end position="2090"/>
    </location>
</feature>
<feature type="domain" description="Ketosynthase family 3 (KS3)" evidence="5">
    <location>
        <begin position="375"/>
        <end position="808"/>
    </location>
</feature>
<feature type="domain" description="PKS/mFAS DH" evidence="6">
    <location>
        <begin position="1293"/>
        <end position="1607"/>
    </location>
</feature>
<feature type="domain" description="Carrier" evidence="4">
    <location>
        <begin position="1649"/>
        <end position="1726"/>
    </location>
</feature>
<feature type="region of interest" description="N-terminal acylcarrier protein transacylase (SAT) domain" evidence="3">
    <location>
        <begin position="12"/>
        <end position="250"/>
    </location>
</feature>
<feature type="region of interest" description="Malonyl-CoA:ACP transacylase (MAT) domain" evidence="3">
    <location>
        <begin position="912"/>
        <end position="1195"/>
    </location>
</feature>
<feature type="region of interest" description="N-terminal hotdog fold" evidence="6">
    <location>
        <begin position="1293"/>
        <end position="1433"/>
    </location>
</feature>
<feature type="region of interest" description="Product template (PT) domain" evidence="3">
    <location>
        <begin position="1304"/>
        <end position="1604"/>
    </location>
</feature>
<feature type="region of interest" description="C-terminal hotdog fold" evidence="6">
    <location>
        <begin position="1459"/>
        <end position="1607"/>
    </location>
</feature>
<feature type="region of interest" description="Disordered" evidence="8">
    <location>
        <begin position="1615"/>
        <end position="1650"/>
    </location>
</feature>
<feature type="region of interest" description="Thioesterase (TE) domain" evidence="3">
    <location>
        <begin position="1820"/>
        <end position="1964"/>
    </location>
</feature>
<feature type="compositionally biased region" description="Basic and acidic residues" evidence="8">
    <location>
        <begin position="1638"/>
        <end position="1649"/>
    </location>
</feature>
<feature type="active site" description="For beta-ketoacyl synthase activity" evidence="5">
    <location>
        <position position="551"/>
    </location>
</feature>
<feature type="active site" description="For beta-ketoacyl synthase activity" evidence="5">
    <location>
        <position position="686"/>
    </location>
</feature>
<feature type="active site" description="For beta-ketoacyl synthase activity" evidence="5">
    <location>
        <position position="726"/>
    </location>
</feature>
<feature type="active site" description="For acyl/malonyl transferase activity" evidence="7">
    <location>
        <position position="1003"/>
    </location>
</feature>
<feature type="modified residue" description="O-(pantetheine 4'-phosphoryl)serine" evidence="4">
    <location>
        <position position="1686"/>
    </location>
</feature>
<organism>
    <name type="scientific">Metacordyceps chlamydosporia</name>
    <name type="common">Nematophagous fungus</name>
    <name type="synonym">Pochonia chlamydosporia</name>
    <dbReference type="NCBI Taxonomy" id="280754"/>
    <lineage>
        <taxon>Eukaryota</taxon>
        <taxon>Fungi</taxon>
        <taxon>Dikarya</taxon>
        <taxon>Ascomycota</taxon>
        <taxon>Pezizomycotina</taxon>
        <taxon>Sordariomycetes</taxon>
        <taxon>Hypocreomycetidae</taxon>
        <taxon>Hypocreales</taxon>
        <taxon>Clavicipitaceae</taxon>
        <taxon>Pochonia</taxon>
    </lineage>
</organism>
<keyword id="KW-0012">Acyltransferase</keyword>
<keyword id="KW-0511">Multifunctional enzyme</keyword>
<keyword id="KW-0596">Phosphopantetheine</keyword>
<keyword id="KW-0597">Phosphoprotein</keyword>
<keyword id="KW-0808">Transferase</keyword>